<dbReference type="EMBL" id="Y18136">
    <property type="protein sequence ID" value="CAA77063.1"/>
    <property type="molecule type" value="mRNA"/>
</dbReference>
<dbReference type="EMBL" id="AJ238150">
    <property type="protein sequence ID" value="CAB41598.1"/>
    <property type="molecule type" value="Genomic_DNA"/>
</dbReference>
<dbReference type="RefSeq" id="NP_001003177.1">
    <property type="nucleotide sequence ID" value="NM_001003177.1"/>
</dbReference>
<dbReference type="RefSeq" id="XP_005641040.1">
    <property type="nucleotide sequence ID" value="XM_005640983.2"/>
</dbReference>
<dbReference type="RefSeq" id="XP_038304744.1">
    <property type="nucleotide sequence ID" value="XM_038448816.1"/>
</dbReference>
<dbReference type="RefSeq" id="XP_038304745.1">
    <property type="nucleotide sequence ID" value="XM_038448817.1"/>
</dbReference>
<dbReference type="SMR" id="O77808"/>
<dbReference type="FunCoup" id="O77808">
    <property type="interactions" value="152"/>
</dbReference>
<dbReference type="STRING" id="9615.ENSCAFP00000028678"/>
<dbReference type="GlyCosmos" id="O77808">
    <property type="glycosylation" value="1 site, No reported glycans"/>
</dbReference>
<dbReference type="PaxDb" id="9612-ENSCAFP00000028678"/>
<dbReference type="GeneID" id="403804"/>
<dbReference type="KEGG" id="cfa:403804"/>
<dbReference type="CTD" id="554"/>
<dbReference type="eggNOG" id="KOG3656">
    <property type="taxonomic scope" value="Eukaryota"/>
</dbReference>
<dbReference type="HOGENOM" id="CLU_009579_15_3_1"/>
<dbReference type="InParanoid" id="O77808"/>
<dbReference type="OMA" id="FIATCQG"/>
<dbReference type="OrthoDB" id="5987909at2759"/>
<dbReference type="TreeFam" id="TF106499"/>
<dbReference type="Proteomes" id="UP000002254">
    <property type="component" value="Unplaced"/>
</dbReference>
<dbReference type="Proteomes" id="UP000694429">
    <property type="component" value="Unplaced"/>
</dbReference>
<dbReference type="Proteomes" id="UP000694542">
    <property type="component" value="Unplaced"/>
</dbReference>
<dbReference type="Proteomes" id="UP000805418">
    <property type="component" value="Unplaced"/>
</dbReference>
<dbReference type="GO" id="GO:0005886">
    <property type="term" value="C:plasma membrane"/>
    <property type="evidence" value="ECO:0000318"/>
    <property type="project" value="GO_Central"/>
</dbReference>
<dbReference type="GO" id="GO:0005000">
    <property type="term" value="F:vasopressin receptor activity"/>
    <property type="evidence" value="ECO:0000318"/>
    <property type="project" value="GO_Central"/>
</dbReference>
<dbReference type="GO" id="GO:0032870">
    <property type="term" value="P:cellular response to hormone stimulus"/>
    <property type="evidence" value="ECO:0000318"/>
    <property type="project" value="GO_Central"/>
</dbReference>
<dbReference type="GO" id="GO:0007186">
    <property type="term" value="P:G protein-coupled receptor signaling pathway"/>
    <property type="evidence" value="ECO:0000318"/>
    <property type="project" value="GO_Central"/>
</dbReference>
<dbReference type="GO" id="GO:0010628">
    <property type="term" value="P:positive regulation of gene expression"/>
    <property type="evidence" value="ECO:0000250"/>
    <property type="project" value="UniProtKB"/>
</dbReference>
<dbReference type="GO" id="GO:0045907">
    <property type="term" value="P:positive regulation of vasoconstriction"/>
    <property type="evidence" value="ECO:0000318"/>
    <property type="project" value="GO_Central"/>
</dbReference>
<dbReference type="GO" id="GO:0001992">
    <property type="term" value="P:regulation of systemic arterial blood pressure by vasopressin"/>
    <property type="evidence" value="ECO:0000318"/>
    <property type="project" value="GO_Central"/>
</dbReference>
<dbReference type="CDD" id="cd15388">
    <property type="entry name" value="7tmA_V2R"/>
    <property type="match status" value="1"/>
</dbReference>
<dbReference type="FunFam" id="1.20.1070.10:FF:000190">
    <property type="entry name" value="Vasopressin V2 receptor"/>
    <property type="match status" value="1"/>
</dbReference>
<dbReference type="Gene3D" id="1.20.1070.10">
    <property type="entry name" value="Rhodopsin 7-helix transmembrane proteins"/>
    <property type="match status" value="1"/>
</dbReference>
<dbReference type="InterPro" id="IPR000276">
    <property type="entry name" value="GPCR_Rhodpsn"/>
</dbReference>
<dbReference type="InterPro" id="IPR017452">
    <property type="entry name" value="GPCR_Rhodpsn_7TM"/>
</dbReference>
<dbReference type="InterPro" id="IPR001817">
    <property type="entry name" value="Vasoprsn_rcpt"/>
</dbReference>
<dbReference type="InterPro" id="IPR000161">
    <property type="entry name" value="Vprsn_rcpt_V2"/>
</dbReference>
<dbReference type="PANTHER" id="PTHR24241">
    <property type="entry name" value="NEUROPEPTIDE RECEPTOR-RELATED G-PROTEIN COUPLED RECEPTOR"/>
    <property type="match status" value="1"/>
</dbReference>
<dbReference type="PANTHER" id="PTHR24241:SF20">
    <property type="entry name" value="VASOPRESSIN V2 RECEPTOR"/>
    <property type="match status" value="1"/>
</dbReference>
<dbReference type="Pfam" id="PF00001">
    <property type="entry name" value="7tm_1"/>
    <property type="match status" value="1"/>
</dbReference>
<dbReference type="PRINTS" id="PR00237">
    <property type="entry name" value="GPCRRHODOPSN"/>
</dbReference>
<dbReference type="PRINTS" id="PR00896">
    <property type="entry name" value="VASOPRESSINR"/>
</dbReference>
<dbReference type="PRINTS" id="PR00898">
    <property type="entry name" value="VASOPRSNV2R"/>
</dbReference>
<dbReference type="SUPFAM" id="SSF81321">
    <property type="entry name" value="Family A G protein-coupled receptor-like"/>
    <property type="match status" value="1"/>
</dbReference>
<dbReference type="PROSITE" id="PS00237">
    <property type="entry name" value="G_PROTEIN_RECEP_F1_1"/>
    <property type="match status" value="1"/>
</dbReference>
<dbReference type="PROSITE" id="PS50262">
    <property type="entry name" value="G_PROTEIN_RECEP_F1_2"/>
    <property type="match status" value="1"/>
</dbReference>
<comment type="function">
    <text evidence="2">Receptor for arginine vasopressin. The activity of this receptor is mediated by G proteins which activate adenylate cyclase. Involved in renal water reabsorption (By similarity).</text>
</comment>
<comment type="subunit">
    <text evidence="2">Interacts with ARRDC4 (By similarity). Identified in a complex containing at least ARRDC4, V2R and HGS (By similarity). Interacts with TMEM147 (By similarity).</text>
</comment>
<comment type="subcellular location">
    <subcellularLocation>
        <location evidence="2">Cell membrane</location>
        <topology evidence="2">Multi-pass membrane protein</topology>
    </subcellularLocation>
</comment>
<comment type="similarity">
    <text evidence="4">Belongs to the G-protein coupled receptor 1 family. Vasopressin/oxytocin receptor subfamily.</text>
</comment>
<evidence type="ECO:0000250" key="1"/>
<evidence type="ECO:0000250" key="2">
    <source>
        <dbReference type="UniProtKB" id="P30518"/>
    </source>
</evidence>
<evidence type="ECO:0000255" key="3"/>
<evidence type="ECO:0000255" key="4">
    <source>
        <dbReference type="PROSITE-ProRule" id="PRU00521"/>
    </source>
</evidence>
<evidence type="ECO:0000256" key="5">
    <source>
        <dbReference type="SAM" id="MobiDB-lite"/>
    </source>
</evidence>
<protein>
    <recommendedName>
        <fullName>Vasopressin V2 receptor</fullName>
        <shortName>V2R</shortName>
    </recommendedName>
    <alternativeName>
        <fullName>AVPR V2</fullName>
    </alternativeName>
    <alternativeName>
        <fullName>Antidiuretic hormone receptor</fullName>
    </alternativeName>
    <alternativeName>
        <fullName>Renal-type arginine vasopressin receptor</fullName>
    </alternativeName>
</protein>
<accession>O77808</accession>
<proteinExistence type="evidence at transcript level"/>
<gene>
    <name type="primary">AVPR2</name>
    <name type="synonym">V2R</name>
</gene>
<organism>
    <name type="scientific">Canis lupus familiaris</name>
    <name type="common">Dog</name>
    <name type="synonym">Canis familiaris</name>
    <dbReference type="NCBI Taxonomy" id="9615"/>
    <lineage>
        <taxon>Eukaryota</taxon>
        <taxon>Metazoa</taxon>
        <taxon>Chordata</taxon>
        <taxon>Craniata</taxon>
        <taxon>Vertebrata</taxon>
        <taxon>Euteleostomi</taxon>
        <taxon>Mammalia</taxon>
        <taxon>Eutheria</taxon>
        <taxon>Laurasiatheria</taxon>
        <taxon>Carnivora</taxon>
        <taxon>Caniformia</taxon>
        <taxon>Canidae</taxon>
        <taxon>Canis</taxon>
    </lineage>
</organism>
<reference key="1">
    <citation type="submission" date="1998-09" db="EMBL/GenBank/DDBJ databases">
        <authorList>
            <person name="Weber B.I.L."/>
            <person name="Rascher W."/>
        </authorList>
    </citation>
    <scope>NUCLEOTIDE SEQUENCE [MRNA]</scope>
</reference>
<reference key="2">
    <citation type="submission" date="1999-04" db="EMBL/GenBank/DDBJ databases">
        <title>Organization of the dog vasopressin receptor gene.</title>
        <authorList>
            <person name="Weber B.I.L."/>
            <person name="Rascher W."/>
        </authorList>
    </citation>
    <scope>NUCLEOTIDE SEQUENCE [GENOMIC DNA]</scope>
</reference>
<name>V2R_CANLF</name>
<feature type="chain" id="PRO_0000070207" description="Vasopressin V2 receptor">
    <location>
        <begin position="1"/>
        <end position="370"/>
    </location>
</feature>
<feature type="topological domain" description="Extracellular" evidence="3">
    <location>
        <begin position="1"/>
        <end position="37"/>
    </location>
</feature>
<feature type="transmembrane region" description="Helical; Name=1" evidence="3">
    <location>
        <begin position="38"/>
        <end position="62"/>
    </location>
</feature>
<feature type="topological domain" description="Cytoplasmic" evidence="3">
    <location>
        <begin position="63"/>
        <end position="76"/>
    </location>
</feature>
<feature type="transmembrane region" description="Helical; Name=2" evidence="3">
    <location>
        <begin position="77"/>
        <end position="97"/>
    </location>
</feature>
<feature type="topological domain" description="Extracellular" evidence="3">
    <location>
        <begin position="98"/>
        <end position="112"/>
    </location>
</feature>
<feature type="transmembrane region" description="Helical; Name=3" evidence="3">
    <location>
        <begin position="113"/>
        <end position="134"/>
    </location>
</feature>
<feature type="topological domain" description="Cytoplasmic" evidence="3">
    <location>
        <begin position="135"/>
        <end position="158"/>
    </location>
</feature>
<feature type="transmembrane region" description="Helical; Name=4" evidence="3">
    <location>
        <begin position="159"/>
        <end position="179"/>
    </location>
</feature>
<feature type="topological domain" description="Extracellular" evidence="3">
    <location>
        <begin position="180"/>
        <end position="199"/>
    </location>
</feature>
<feature type="transmembrane region" description="Helical; Name=5" evidence="3">
    <location>
        <begin position="200"/>
        <end position="219"/>
    </location>
</feature>
<feature type="topological domain" description="Cytoplasmic" evidence="3">
    <location>
        <begin position="220"/>
        <end position="270"/>
    </location>
</feature>
<feature type="transmembrane region" description="Helical; Name=6" evidence="3">
    <location>
        <begin position="271"/>
        <end position="292"/>
    </location>
</feature>
<feature type="topological domain" description="Extracellular" evidence="3">
    <location>
        <begin position="293"/>
        <end position="307"/>
    </location>
</feature>
<feature type="transmembrane region" description="Helical; Name=7" evidence="3">
    <location>
        <begin position="308"/>
        <end position="327"/>
    </location>
</feature>
<feature type="topological domain" description="Cytoplasmic" evidence="3">
    <location>
        <begin position="328"/>
        <end position="370"/>
    </location>
</feature>
<feature type="region of interest" description="Disordered" evidence="5">
    <location>
        <begin position="1"/>
        <end position="26"/>
    </location>
</feature>
<feature type="compositionally biased region" description="Polar residues" evidence="5">
    <location>
        <begin position="1"/>
        <end position="10"/>
    </location>
</feature>
<feature type="lipid moiety-binding region" description="S-palmitoyl cysteine" evidence="1">
    <location>
        <position position="340"/>
    </location>
</feature>
<feature type="glycosylation site" description="N-linked (GlcNAc...) asparagine" evidence="3">
    <location>
        <position position="22"/>
    </location>
</feature>
<keyword id="KW-1003">Cell membrane</keyword>
<keyword id="KW-0297">G-protein coupled receptor</keyword>
<keyword id="KW-0325">Glycoprotein</keyword>
<keyword id="KW-0449">Lipoprotein</keyword>
<keyword id="KW-0472">Membrane</keyword>
<keyword id="KW-0564">Palmitate</keyword>
<keyword id="KW-0675">Receptor</keyword>
<keyword id="KW-1185">Reference proteome</keyword>
<keyword id="KW-0807">Transducer</keyword>
<keyword id="KW-0812">Transmembrane</keyword>
<keyword id="KW-1133">Transmembrane helix</keyword>
<sequence length="370" mass="40200">MLLASTTSAVPRTLSPPTPAGNGSRELLDTRDPLLVQAELALLSTVFVAVALSNGLVLGALARRVRRGRWAPMHVFIGHLCLADLAVALFQVLPQLAWDATDRFRGPDALCRAVKYLQMVGMYASSYMILAMTLDRHRAICRPMLAYRHGGGARWNRPVLVAWAFSLILSLPQLFIFAQRDVGNGSGVLDCWAHFAEPWGLRAYVTWIALMVFVAPALGIAACQVLIFREIHSSLVPGPAERAGGCRGGHRTGSPSEGARVSAAMAKTVRMTLVIVIVYVLCWAPFFLVQLWAAWDPQAPLEGAPFVLLMLLASLNSCTNPWIYAFFSSSVSSELRSLFCWARSRAPPSLGPQEESCATASSFLAKDTSS</sequence>